<proteinExistence type="inferred from homology"/>
<name>ODO1_LEPIN</name>
<organism>
    <name type="scientific">Leptospira interrogans serogroup Icterohaemorrhagiae serovar Lai (strain 56601)</name>
    <dbReference type="NCBI Taxonomy" id="189518"/>
    <lineage>
        <taxon>Bacteria</taxon>
        <taxon>Pseudomonadati</taxon>
        <taxon>Spirochaetota</taxon>
        <taxon>Spirochaetia</taxon>
        <taxon>Leptospirales</taxon>
        <taxon>Leptospiraceae</taxon>
        <taxon>Leptospira</taxon>
    </lineage>
</organism>
<evidence type="ECO:0000255" key="1">
    <source>
        <dbReference type="HAMAP-Rule" id="MF_01169"/>
    </source>
</evidence>
<feature type="chain" id="PRO_0000162174" description="2-oxoglutarate dehydrogenase E1 component">
    <location>
        <begin position="1"/>
        <end position="920"/>
    </location>
</feature>
<protein>
    <recommendedName>
        <fullName evidence="1">2-oxoglutarate dehydrogenase E1 component</fullName>
        <ecNumber evidence="1">1.2.4.2</ecNumber>
    </recommendedName>
    <alternativeName>
        <fullName evidence="1">Alpha-ketoglutarate dehydrogenase</fullName>
    </alternativeName>
</protein>
<comment type="function">
    <text evidence="1">E1 component of the 2-oxoglutarate dehydrogenase (OGDH) complex which catalyzes the decarboxylation of 2-oxoglutarate, the first step in the conversion of 2-oxoglutarate to succinyl-CoA and CO(2).</text>
</comment>
<comment type="catalytic activity">
    <reaction evidence="1">
        <text>N(6)-[(R)-lipoyl]-L-lysyl-[protein] + 2-oxoglutarate + H(+) = N(6)-[(R)-S(8)-succinyldihydrolipoyl]-L-lysyl-[protein] + CO2</text>
        <dbReference type="Rhea" id="RHEA:12188"/>
        <dbReference type="Rhea" id="RHEA-COMP:10474"/>
        <dbReference type="Rhea" id="RHEA-COMP:20092"/>
        <dbReference type="ChEBI" id="CHEBI:15378"/>
        <dbReference type="ChEBI" id="CHEBI:16526"/>
        <dbReference type="ChEBI" id="CHEBI:16810"/>
        <dbReference type="ChEBI" id="CHEBI:83099"/>
        <dbReference type="ChEBI" id="CHEBI:83120"/>
        <dbReference type="EC" id="1.2.4.2"/>
    </reaction>
</comment>
<comment type="cofactor">
    <cofactor evidence="1">
        <name>thiamine diphosphate</name>
        <dbReference type="ChEBI" id="CHEBI:58937"/>
    </cofactor>
</comment>
<comment type="subunit">
    <text evidence="1">Homodimer. Part of the 2-oxoglutarate dehydrogenase (OGDH) complex composed of E1 (2-oxoglutarate dehydrogenase), E2 (dihydrolipoamide succinyltransferase) and E3 (dihydrolipoamide dehydrogenase); the complex contains multiple copies of the three enzymatic components (E1, E2 and E3).</text>
</comment>
<comment type="similarity">
    <text evidence="1">Belongs to the alpha-ketoglutarate dehydrogenase family.</text>
</comment>
<keyword id="KW-0324">Glycolysis</keyword>
<keyword id="KW-0560">Oxidoreductase</keyword>
<keyword id="KW-1185">Reference proteome</keyword>
<keyword id="KW-0786">Thiamine pyrophosphate</keyword>
<sequence>MKIEKLMALYGENGALLEELYNQYKLNPETLDKEWKSFFQEVDTNGLANGSGYTNGNGKSAVATSFTDAQAASIREMGIINLLNAYRRQGHLAAKLDPLGIQKPNRTFIDSKLHNISPADIDTVVDSETLGRVKLAEIVDLYEKVYCNTIGAEHFYLVNDEEREWLQKKMESPEFLAPLPRGIKLRLFEKLFQADYFETFLAKKYVGKKRFSLEGGESFIPLLDTIVEEAGYHQMDGLVIGMAHRGRLNVLVNIIEKPASLIFAEFEEKTDKDNLSYADVKYHLGYSNSRMTTSGKEVKLSLAFNPSHLECVDPVVTGSVRARQTLIGDKDRSKYMPILIHGDAAFAGQGVVAETLNLMNLEGYTTGGTFHIVVNNQIGFTTLPDESRSTLYATDLAKGFQIPIIHVNGDDPEAVYRVVKLGMEYRQKFKKDFIIDLVCYRRLGHNETDEPAFTQPKMYAIIKNHPPTVKLYEKRLVEEGDIPQEDIDFIKNGSMHGLEDSFQRAKEQDVKIRVDTMQGVWSKFSKDSLDSEPATKLLAEQMHGIVQALTSVPQGFTPNSKLVKLLQSRKEMAEGKIPVDWGFAEALSFGSILESGFRIRLSGQDSQRGTFSHRHAVLVDTNTNEKYIPLNHISSKQAKAEIINSSLSEFSVLGFEYGYSLSDPNALVMWEAQFGDFANSAQVIFDQFISSSEVKWQRLSGLIMLLPHGYEGQGPEHSSARLERFLQLCALDNMQVCNLTTAAQYFHLLRRQMLRNYRKPLVIVTPKSLLRFPASLSPVEDILQGAFREILIDDSGSKPDKIEKVVFSAGKVYYDLMKYKDENKIKNVALVRVEQIYPFPAKEIQSSLKTFKNAKQFVWCQEEPKNQGAWFFVRERIEELLPGNARLVYAGRHESPSPAAGHMKLHLQEQDQLVLDAFQA</sequence>
<reference key="1">
    <citation type="journal article" date="2003" name="Nature">
        <title>Unique physiological and pathogenic features of Leptospira interrogans revealed by whole-genome sequencing.</title>
        <authorList>
            <person name="Ren S.-X."/>
            <person name="Fu G."/>
            <person name="Jiang X.-G."/>
            <person name="Zeng R."/>
            <person name="Miao Y.-G."/>
            <person name="Xu H."/>
            <person name="Zhang Y.-X."/>
            <person name="Xiong H."/>
            <person name="Lu G."/>
            <person name="Lu L.-F."/>
            <person name="Jiang H.-Q."/>
            <person name="Jia J."/>
            <person name="Tu Y.-F."/>
            <person name="Jiang J.-X."/>
            <person name="Gu W.-Y."/>
            <person name="Zhang Y.-Q."/>
            <person name="Cai Z."/>
            <person name="Sheng H.-H."/>
            <person name="Yin H.-F."/>
            <person name="Zhang Y."/>
            <person name="Zhu G.-F."/>
            <person name="Wan M."/>
            <person name="Huang H.-L."/>
            <person name="Qian Z."/>
            <person name="Wang S.-Y."/>
            <person name="Ma W."/>
            <person name="Yao Z.-J."/>
            <person name="Shen Y."/>
            <person name="Qiang B.-Q."/>
            <person name="Xia Q.-C."/>
            <person name="Guo X.-K."/>
            <person name="Danchin A."/>
            <person name="Saint Girons I."/>
            <person name="Somerville R.L."/>
            <person name="Wen Y.-M."/>
            <person name="Shi M.-H."/>
            <person name="Chen Z."/>
            <person name="Xu J.-G."/>
            <person name="Zhao G.-P."/>
        </authorList>
    </citation>
    <scope>NUCLEOTIDE SEQUENCE [LARGE SCALE GENOMIC DNA]</scope>
    <source>
        <strain>56601</strain>
    </source>
</reference>
<gene>
    <name evidence="1" type="primary">sucA</name>
    <name evidence="1" type="synonym">odhA</name>
    <name type="ordered locus">LA_1224</name>
</gene>
<accession>Q8F6S7</accession>
<dbReference type="EC" id="1.2.4.2" evidence="1"/>
<dbReference type="EMBL" id="AE010300">
    <property type="protein sequence ID" value="AAN48423.1"/>
    <property type="molecule type" value="Genomic_DNA"/>
</dbReference>
<dbReference type="RefSeq" id="NP_711405.1">
    <property type="nucleotide sequence ID" value="NC_004342.2"/>
</dbReference>
<dbReference type="RefSeq" id="WP_000687652.1">
    <property type="nucleotide sequence ID" value="NC_004342.2"/>
</dbReference>
<dbReference type="SMR" id="Q8F6S7"/>
<dbReference type="FunCoup" id="Q8F6S7">
    <property type="interactions" value="428"/>
</dbReference>
<dbReference type="STRING" id="189518.LA_1224"/>
<dbReference type="PaxDb" id="189518-LA_1224"/>
<dbReference type="EnsemblBacteria" id="AAN48423">
    <property type="protein sequence ID" value="AAN48423"/>
    <property type="gene ID" value="LA_1224"/>
</dbReference>
<dbReference type="KEGG" id="lil:LA_1224"/>
<dbReference type="PATRIC" id="fig|189518.3.peg.1221"/>
<dbReference type="HOGENOM" id="CLU_004709_1_0_12"/>
<dbReference type="InParanoid" id="Q8F6S7"/>
<dbReference type="OrthoDB" id="9759785at2"/>
<dbReference type="Proteomes" id="UP000001408">
    <property type="component" value="Chromosome I"/>
</dbReference>
<dbReference type="GO" id="GO:0005829">
    <property type="term" value="C:cytosol"/>
    <property type="evidence" value="ECO:0000318"/>
    <property type="project" value="GO_Central"/>
</dbReference>
<dbReference type="GO" id="GO:0045252">
    <property type="term" value="C:oxoglutarate dehydrogenase complex"/>
    <property type="evidence" value="ECO:0000318"/>
    <property type="project" value="GO_Central"/>
</dbReference>
<dbReference type="GO" id="GO:0004591">
    <property type="term" value="F:oxoglutarate dehydrogenase (succinyl-transferring) activity"/>
    <property type="evidence" value="ECO:0000318"/>
    <property type="project" value="GO_Central"/>
</dbReference>
<dbReference type="GO" id="GO:0030976">
    <property type="term" value="F:thiamine pyrophosphate binding"/>
    <property type="evidence" value="ECO:0007669"/>
    <property type="project" value="UniProtKB-UniRule"/>
</dbReference>
<dbReference type="GO" id="GO:0006096">
    <property type="term" value="P:glycolytic process"/>
    <property type="evidence" value="ECO:0007669"/>
    <property type="project" value="UniProtKB-UniRule"/>
</dbReference>
<dbReference type="GO" id="GO:0006099">
    <property type="term" value="P:tricarboxylic acid cycle"/>
    <property type="evidence" value="ECO:0000318"/>
    <property type="project" value="GO_Central"/>
</dbReference>
<dbReference type="CDD" id="cd02016">
    <property type="entry name" value="TPP_E1_OGDC_like"/>
    <property type="match status" value="1"/>
</dbReference>
<dbReference type="FunFam" id="3.40.50.12470:FF:000009">
    <property type="entry name" value="2-oxoglutarate dehydrogenase E1 component"/>
    <property type="match status" value="1"/>
</dbReference>
<dbReference type="FunFam" id="3.40.50.970:FF:000061">
    <property type="entry name" value="2-oxoglutarate dehydrogenase E1 component"/>
    <property type="match status" value="1"/>
</dbReference>
<dbReference type="Gene3D" id="3.40.50.12470">
    <property type="match status" value="1"/>
</dbReference>
<dbReference type="Gene3D" id="3.40.50.970">
    <property type="match status" value="1"/>
</dbReference>
<dbReference type="Gene3D" id="3.40.50.11610">
    <property type="entry name" value="Multifunctional 2-oxoglutarate metabolism enzyme, C-terminal domain"/>
    <property type="match status" value="1"/>
</dbReference>
<dbReference type="Gene3D" id="1.10.287.1150">
    <property type="entry name" value="TPP helical domain"/>
    <property type="match status" value="1"/>
</dbReference>
<dbReference type="HAMAP" id="MF_01169">
    <property type="entry name" value="SucA_OdhA"/>
    <property type="match status" value="1"/>
</dbReference>
<dbReference type="InterPro" id="IPR032106">
    <property type="entry name" value="2-oxogl_dehyd_N"/>
</dbReference>
<dbReference type="InterPro" id="IPR011603">
    <property type="entry name" value="2oxoglutarate_DH_E1"/>
</dbReference>
<dbReference type="InterPro" id="IPR023784">
    <property type="entry name" value="2oxoglutarate_DH_E1_bac"/>
</dbReference>
<dbReference type="InterPro" id="IPR001017">
    <property type="entry name" value="DH_E1"/>
</dbReference>
<dbReference type="InterPro" id="IPR042179">
    <property type="entry name" value="KGD_C_sf"/>
</dbReference>
<dbReference type="InterPro" id="IPR031717">
    <property type="entry name" value="ODO-1/KGD_C"/>
</dbReference>
<dbReference type="InterPro" id="IPR029061">
    <property type="entry name" value="THDP-binding"/>
</dbReference>
<dbReference type="InterPro" id="IPR005475">
    <property type="entry name" value="Transketolase-like_Pyr-bd"/>
</dbReference>
<dbReference type="NCBIfam" id="TIGR00239">
    <property type="entry name" value="2oxo_dh_E1"/>
    <property type="match status" value="1"/>
</dbReference>
<dbReference type="NCBIfam" id="NF006914">
    <property type="entry name" value="PRK09404.1"/>
    <property type="match status" value="1"/>
</dbReference>
<dbReference type="NCBIfam" id="NF008907">
    <property type="entry name" value="PRK12270.1"/>
    <property type="match status" value="1"/>
</dbReference>
<dbReference type="PANTHER" id="PTHR23152:SF4">
    <property type="entry name" value="2-OXOADIPATE DEHYDROGENASE COMPLEX COMPONENT E1"/>
    <property type="match status" value="1"/>
</dbReference>
<dbReference type="PANTHER" id="PTHR23152">
    <property type="entry name" value="2-OXOGLUTARATE DEHYDROGENASE"/>
    <property type="match status" value="1"/>
</dbReference>
<dbReference type="Pfam" id="PF16078">
    <property type="entry name" value="2-oxogl_dehyd_N"/>
    <property type="match status" value="1"/>
</dbReference>
<dbReference type="Pfam" id="PF00676">
    <property type="entry name" value="E1_dh"/>
    <property type="match status" value="1"/>
</dbReference>
<dbReference type="Pfam" id="PF16870">
    <property type="entry name" value="OxoGdeHyase_C"/>
    <property type="match status" value="1"/>
</dbReference>
<dbReference type="Pfam" id="PF02779">
    <property type="entry name" value="Transket_pyr"/>
    <property type="match status" value="1"/>
</dbReference>
<dbReference type="PIRSF" id="PIRSF000157">
    <property type="entry name" value="Oxoglu_dh_E1"/>
    <property type="match status" value="1"/>
</dbReference>
<dbReference type="SMART" id="SM00861">
    <property type="entry name" value="Transket_pyr"/>
    <property type="match status" value="1"/>
</dbReference>
<dbReference type="SUPFAM" id="SSF52518">
    <property type="entry name" value="Thiamin diphosphate-binding fold (THDP-binding)"/>
    <property type="match status" value="2"/>
</dbReference>